<name>OAF_XENLA</name>
<protein>
    <recommendedName>
        <fullName>Out at first protein homolog</fullName>
    </recommendedName>
</protein>
<proteinExistence type="evidence at transcript level"/>
<keyword id="KW-1185">Reference proteome</keyword>
<keyword id="KW-0732">Signal</keyword>
<organism>
    <name type="scientific">Xenopus laevis</name>
    <name type="common">African clawed frog</name>
    <dbReference type="NCBI Taxonomy" id="8355"/>
    <lineage>
        <taxon>Eukaryota</taxon>
        <taxon>Metazoa</taxon>
        <taxon>Chordata</taxon>
        <taxon>Craniata</taxon>
        <taxon>Vertebrata</taxon>
        <taxon>Euteleostomi</taxon>
        <taxon>Amphibia</taxon>
        <taxon>Batrachia</taxon>
        <taxon>Anura</taxon>
        <taxon>Pipoidea</taxon>
        <taxon>Pipidae</taxon>
        <taxon>Xenopodinae</taxon>
        <taxon>Xenopus</taxon>
        <taxon>Xenopus</taxon>
    </lineage>
</organism>
<sequence length="269" mass="31139">MFPLDNSRRFLWLLVLLFGCFLPCLADLKVLVRLEDGQLTEENLQADSDKDFITLEFRKTDGTFVTYLADFKQDVKIFHVLILGELERGQSQFQALCFVTRLQSNEIIPSESMAKLRQKNPHAVRQAEEMRGTDTLQMDVAINFTKGVQLTPHIHNICAEAKEAIYTRQEDVRLWLERGIDGSMFEVLPQPSSIPSLHPCKLCPQDWKPCICSYHLSLEWIPCSLKYCKNRDSSVKTTSYRCGIRSCQKAFTFHFYVAQKQLCLWDEET</sequence>
<gene>
    <name type="primary">oaf</name>
</gene>
<reference key="1">
    <citation type="submission" date="2004-06" db="EMBL/GenBank/DDBJ databases">
        <authorList>
            <consortium name="NIH - Xenopus Gene Collection (XGC) project"/>
        </authorList>
    </citation>
    <scope>NUCLEOTIDE SEQUENCE [LARGE SCALE MRNA]</scope>
    <source>
        <tissue>Oocyte</tissue>
    </source>
</reference>
<accession>Q6GPK2</accession>
<evidence type="ECO:0000255" key="1"/>
<evidence type="ECO:0000305" key="2"/>
<dbReference type="EMBL" id="BC073115">
    <property type="protein sequence ID" value="AAH73115.1"/>
    <property type="molecule type" value="mRNA"/>
</dbReference>
<dbReference type="RefSeq" id="NP_001085666.1">
    <property type="nucleotide sequence ID" value="NM_001092197.1"/>
</dbReference>
<dbReference type="DNASU" id="444092"/>
<dbReference type="GeneID" id="444092"/>
<dbReference type="KEGG" id="xla:444092"/>
<dbReference type="AGR" id="Xenbase:XB-GENE-1002629"/>
<dbReference type="CTD" id="444092"/>
<dbReference type="Xenbase" id="XB-GENE-1002629">
    <property type="gene designation" value="oaf.S"/>
</dbReference>
<dbReference type="OMA" id="YMDVAVN"/>
<dbReference type="OrthoDB" id="5947176at2759"/>
<dbReference type="Proteomes" id="UP000186698">
    <property type="component" value="Chromosome 7S"/>
</dbReference>
<dbReference type="Bgee" id="444092">
    <property type="expression patterns" value="Expressed in egg cell and 19 other cell types or tissues"/>
</dbReference>
<dbReference type="InterPro" id="IPR026315">
    <property type="entry name" value="Oaf"/>
</dbReference>
<dbReference type="InterPro" id="IPR053897">
    <property type="entry name" value="Oaf_C"/>
</dbReference>
<dbReference type="InterPro" id="IPR053894">
    <property type="entry name" value="OAF_N"/>
</dbReference>
<dbReference type="PANTHER" id="PTHR13423">
    <property type="entry name" value="OUT AT FIRST"/>
    <property type="match status" value="1"/>
</dbReference>
<dbReference type="PANTHER" id="PTHR13423:SF2">
    <property type="entry name" value="OUT AT FIRST PROTEIN HOMOLOG"/>
    <property type="match status" value="1"/>
</dbReference>
<dbReference type="Pfam" id="PF22873">
    <property type="entry name" value="OAF_C"/>
    <property type="match status" value="1"/>
</dbReference>
<dbReference type="Pfam" id="PF14941">
    <property type="entry name" value="OAF_N"/>
    <property type="match status" value="1"/>
</dbReference>
<feature type="signal peptide" evidence="1">
    <location>
        <begin position="1"/>
        <end position="26"/>
    </location>
</feature>
<feature type="chain" id="PRO_0000292431" description="Out at first protein homolog">
    <location>
        <begin position="27"/>
        <end position="269"/>
    </location>
</feature>
<comment type="similarity">
    <text evidence="2">Belongs to the OAF family.</text>
</comment>